<sequence>MQWEVVIGLEIHTQLATQSKIFSGSATTFGSEPNTQASLVDLGMPGVLPVLNQEAVRMACMFGLAIDAQIGKRNVFARKNYFYPDLPKGYQISQMDLPIVGKGHLDIALEDGTIKRIGVTRAHLEEDAGKSLHEDFSGSTGIDLNRAGTPLLEIVSEPDMRSAKEAVAYVKAIHALVRYLGICDGNMAEGSLRCDCNVSIRPKGQAEFGTRCEIKNVNSFRFIERAINSEIQRQIDLIEDGGKVVQETRLYDPNKDETRSMRSKEEANDYRYFPDPDLLPVVIEDSFLETIRTGLPELPPQKVERFQSQYGLSAYDANVLASSREQADYFEQVVKIGGDAKLAANWVMVELGSLLNKLGIEIDQAPVSAEQLGGMLLRIRDNTISGKIAKTVFEAMAAGEGDADSIIESKGLKQVTDTGAIDKMLDEVLAANAEQVEQYRAADEAKRGKMFGFFVGQAMKASKGKANPGQVNQLLKAKLEG</sequence>
<name>GATB_PSEPW</name>
<comment type="function">
    <text evidence="1">Allows the formation of correctly charged Asn-tRNA(Asn) or Gln-tRNA(Gln) through the transamidation of misacylated Asp-tRNA(Asn) or Glu-tRNA(Gln) in organisms which lack either or both of asparaginyl-tRNA or glutaminyl-tRNA synthetases. The reaction takes place in the presence of glutamine and ATP through an activated phospho-Asp-tRNA(Asn) or phospho-Glu-tRNA(Gln).</text>
</comment>
<comment type="catalytic activity">
    <reaction evidence="1">
        <text>L-glutamyl-tRNA(Gln) + L-glutamine + ATP + H2O = L-glutaminyl-tRNA(Gln) + L-glutamate + ADP + phosphate + H(+)</text>
        <dbReference type="Rhea" id="RHEA:17521"/>
        <dbReference type="Rhea" id="RHEA-COMP:9681"/>
        <dbReference type="Rhea" id="RHEA-COMP:9684"/>
        <dbReference type="ChEBI" id="CHEBI:15377"/>
        <dbReference type="ChEBI" id="CHEBI:15378"/>
        <dbReference type="ChEBI" id="CHEBI:29985"/>
        <dbReference type="ChEBI" id="CHEBI:30616"/>
        <dbReference type="ChEBI" id="CHEBI:43474"/>
        <dbReference type="ChEBI" id="CHEBI:58359"/>
        <dbReference type="ChEBI" id="CHEBI:78520"/>
        <dbReference type="ChEBI" id="CHEBI:78521"/>
        <dbReference type="ChEBI" id="CHEBI:456216"/>
    </reaction>
</comment>
<comment type="catalytic activity">
    <reaction evidence="1">
        <text>L-aspartyl-tRNA(Asn) + L-glutamine + ATP + H2O = L-asparaginyl-tRNA(Asn) + L-glutamate + ADP + phosphate + 2 H(+)</text>
        <dbReference type="Rhea" id="RHEA:14513"/>
        <dbReference type="Rhea" id="RHEA-COMP:9674"/>
        <dbReference type="Rhea" id="RHEA-COMP:9677"/>
        <dbReference type="ChEBI" id="CHEBI:15377"/>
        <dbReference type="ChEBI" id="CHEBI:15378"/>
        <dbReference type="ChEBI" id="CHEBI:29985"/>
        <dbReference type="ChEBI" id="CHEBI:30616"/>
        <dbReference type="ChEBI" id="CHEBI:43474"/>
        <dbReference type="ChEBI" id="CHEBI:58359"/>
        <dbReference type="ChEBI" id="CHEBI:78515"/>
        <dbReference type="ChEBI" id="CHEBI:78516"/>
        <dbReference type="ChEBI" id="CHEBI:456216"/>
    </reaction>
</comment>
<comment type="subunit">
    <text evidence="1">Heterotrimer of A, B and C subunits.</text>
</comment>
<comment type="similarity">
    <text evidence="1">Belongs to the GatB/GatE family. GatB subfamily.</text>
</comment>
<reference key="1">
    <citation type="submission" date="2008-02" db="EMBL/GenBank/DDBJ databases">
        <title>Complete sequence of Pseudomonas putida W619.</title>
        <authorList>
            <person name="Copeland A."/>
            <person name="Lucas S."/>
            <person name="Lapidus A."/>
            <person name="Barry K."/>
            <person name="Detter J.C."/>
            <person name="Glavina del Rio T."/>
            <person name="Dalin E."/>
            <person name="Tice H."/>
            <person name="Pitluck S."/>
            <person name="Chain P."/>
            <person name="Malfatti S."/>
            <person name="Shin M."/>
            <person name="Vergez L."/>
            <person name="Schmutz J."/>
            <person name="Larimer F."/>
            <person name="Land M."/>
            <person name="Hauser L."/>
            <person name="Kyrpides N."/>
            <person name="Kim E."/>
            <person name="Taghavi S."/>
            <person name="Vangronsveld D."/>
            <person name="van der Lelie D."/>
            <person name="Richardson P."/>
        </authorList>
    </citation>
    <scope>NUCLEOTIDE SEQUENCE [LARGE SCALE GENOMIC DNA]</scope>
    <source>
        <strain>W619</strain>
    </source>
</reference>
<accession>B1JDP2</accession>
<organism>
    <name type="scientific">Pseudomonas putida (strain W619)</name>
    <dbReference type="NCBI Taxonomy" id="390235"/>
    <lineage>
        <taxon>Bacteria</taxon>
        <taxon>Pseudomonadati</taxon>
        <taxon>Pseudomonadota</taxon>
        <taxon>Gammaproteobacteria</taxon>
        <taxon>Pseudomonadales</taxon>
        <taxon>Pseudomonadaceae</taxon>
        <taxon>Pseudomonas</taxon>
    </lineage>
</organism>
<dbReference type="EC" id="6.3.5.-" evidence="1"/>
<dbReference type="EMBL" id="CP000949">
    <property type="protein sequence ID" value="ACA74765.1"/>
    <property type="molecule type" value="Genomic_DNA"/>
</dbReference>
<dbReference type="SMR" id="B1JDP2"/>
<dbReference type="STRING" id="390235.PputW619_4285"/>
<dbReference type="KEGG" id="ppw:PputW619_4285"/>
<dbReference type="eggNOG" id="COG0064">
    <property type="taxonomic scope" value="Bacteria"/>
</dbReference>
<dbReference type="HOGENOM" id="CLU_019240_0_0_6"/>
<dbReference type="OrthoDB" id="9804078at2"/>
<dbReference type="GO" id="GO:0050566">
    <property type="term" value="F:asparaginyl-tRNA synthase (glutamine-hydrolyzing) activity"/>
    <property type="evidence" value="ECO:0007669"/>
    <property type="project" value="RHEA"/>
</dbReference>
<dbReference type="GO" id="GO:0005524">
    <property type="term" value="F:ATP binding"/>
    <property type="evidence" value="ECO:0007669"/>
    <property type="project" value="UniProtKB-KW"/>
</dbReference>
<dbReference type="GO" id="GO:0050567">
    <property type="term" value="F:glutaminyl-tRNA synthase (glutamine-hydrolyzing) activity"/>
    <property type="evidence" value="ECO:0007669"/>
    <property type="project" value="UniProtKB-UniRule"/>
</dbReference>
<dbReference type="GO" id="GO:0070681">
    <property type="term" value="P:glutaminyl-tRNAGln biosynthesis via transamidation"/>
    <property type="evidence" value="ECO:0007669"/>
    <property type="project" value="TreeGrafter"/>
</dbReference>
<dbReference type="GO" id="GO:0006412">
    <property type="term" value="P:translation"/>
    <property type="evidence" value="ECO:0007669"/>
    <property type="project" value="UniProtKB-UniRule"/>
</dbReference>
<dbReference type="FunFam" id="1.10.10.410:FF:000001">
    <property type="entry name" value="Aspartyl/glutamyl-tRNA(Asn/Gln) amidotransferase subunit B"/>
    <property type="match status" value="1"/>
</dbReference>
<dbReference type="FunFam" id="1.10.150.380:FF:000001">
    <property type="entry name" value="Aspartyl/glutamyl-tRNA(Asn/Gln) amidotransferase subunit B"/>
    <property type="match status" value="1"/>
</dbReference>
<dbReference type="Gene3D" id="1.10.10.410">
    <property type="match status" value="1"/>
</dbReference>
<dbReference type="Gene3D" id="1.10.150.380">
    <property type="entry name" value="GatB domain, N-terminal subdomain"/>
    <property type="match status" value="1"/>
</dbReference>
<dbReference type="HAMAP" id="MF_00121">
    <property type="entry name" value="GatB"/>
    <property type="match status" value="1"/>
</dbReference>
<dbReference type="InterPro" id="IPR017959">
    <property type="entry name" value="Asn/Gln-tRNA_amidoTrfase_suB/E"/>
</dbReference>
<dbReference type="InterPro" id="IPR006075">
    <property type="entry name" value="Asn/Gln-tRNA_Trfase_suB/E_cat"/>
</dbReference>
<dbReference type="InterPro" id="IPR018027">
    <property type="entry name" value="Asn/Gln_amidotransferase"/>
</dbReference>
<dbReference type="InterPro" id="IPR003789">
    <property type="entry name" value="Asn/Gln_tRNA_amidoTrase-B-like"/>
</dbReference>
<dbReference type="InterPro" id="IPR004413">
    <property type="entry name" value="GatB"/>
</dbReference>
<dbReference type="InterPro" id="IPR042114">
    <property type="entry name" value="GatB_C_1"/>
</dbReference>
<dbReference type="InterPro" id="IPR023168">
    <property type="entry name" value="GatB_Yqey_C_2"/>
</dbReference>
<dbReference type="InterPro" id="IPR017958">
    <property type="entry name" value="Gln-tRNA_amidoTrfase_suB_CS"/>
</dbReference>
<dbReference type="InterPro" id="IPR014746">
    <property type="entry name" value="Gln_synth/guanido_kin_cat_dom"/>
</dbReference>
<dbReference type="NCBIfam" id="TIGR00133">
    <property type="entry name" value="gatB"/>
    <property type="match status" value="1"/>
</dbReference>
<dbReference type="NCBIfam" id="NF004012">
    <property type="entry name" value="PRK05477.1-2"/>
    <property type="match status" value="1"/>
</dbReference>
<dbReference type="NCBIfam" id="NF004014">
    <property type="entry name" value="PRK05477.1-4"/>
    <property type="match status" value="1"/>
</dbReference>
<dbReference type="NCBIfam" id="NF004015">
    <property type="entry name" value="PRK05477.1-5"/>
    <property type="match status" value="1"/>
</dbReference>
<dbReference type="PANTHER" id="PTHR11659">
    <property type="entry name" value="GLUTAMYL-TRNA GLN AMIDOTRANSFERASE SUBUNIT B MITOCHONDRIAL AND PROKARYOTIC PET112-RELATED"/>
    <property type="match status" value="1"/>
</dbReference>
<dbReference type="PANTHER" id="PTHR11659:SF0">
    <property type="entry name" value="GLUTAMYL-TRNA(GLN) AMIDOTRANSFERASE SUBUNIT B, MITOCHONDRIAL"/>
    <property type="match status" value="1"/>
</dbReference>
<dbReference type="Pfam" id="PF02934">
    <property type="entry name" value="GatB_N"/>
    <property type="match status" value="1"/>
</dbReference>
<dbReference type="Pfam" id="PF02637">
    <property type="entry name" value="GatB_Yqey"/>
    <property type="match status" value="1"/>
</dbReference>
<dbReference type="SMART" id="SM00845">
    <property type="entry name" value="GatB_Yqey"/>
    <property type="match status" value="1"/>
</dbReference>
<dbReference type="SUPFAM" id="SSF89095">
    <property type="entry name" value="GatB/YqeY motif"/>
    <property type="match status" value="1"/>
</dbReference>
<dbReference type="SUPFAM" id="SSF55931">
    <property type="entry name" value="Glutamine synthetase/guanido kinase"/>
    <property type="match status" value="1"/>
</dbReference>
<dbReference type="PROSITE" id="PS01234">
    <property type="entry name" value="GATB"/>
    <property type="match status" value="1"/>
</dbReference>
<evidence type="ECO:0000255" key="1">
    <source>
        <dbReference type="HAMAP-Rule" id="MF_00121"/>
    </source>
</evidence>
<gene>
    <name evidence="1" type="primary">gatB</name>
    <name type="ordered locus">PputW619_4285</name>
</gene>
<keyword id="KW-0067">ATP-binding</keyword>
<keyword id="KW-0436">Ligase</keyword>
<keyword id="KW-0547">Nucleotide-binding</keyword>
<keyword id="KW-0648">Protein biosynthesis</keyword>
<protein>
    <recommendedName>
        <fullName evidence="1">Aspartyl/glutamyl-tRNA(Asn/Gln) amidotransferase subunit B</fullName>
        <shortName evidence="1">Asp/Glu-ADT subunit B</shortName>
        <ecNumber evidence="1">6.3.5.-</ecNumber>
    </recommendedName>
</protein>
<feature type="chain" id="PRO_1000095234" description="Aspartyl/glutamyl-tRNA(Asn/Gln) amidotransferase subunit B">
    <location>
        <begin position="1"/>
        <end position="481"/>
    </location>
</feature>
<proteinExistence type="inferred from homology"/>